<organism>
    <name type="scientific">Mycobacterium sp. (strain MCS)</name>
    <dbReference type="NCBI Taxonomy" id="164756"/>
    <lineage>
        <taxon>Bacteria</taxon>
        <taxon>Bacillati</taxon>
        <taxon>Actinomycetota</taxon>
        <taxon>Actinomycetes</taxon>
        <taxon>Mycobacteriales</taxon>
        <taxon>Mycobacteriaceae</taxon>
        <taxon>Mycobacterium</taxon>
    </lineage>
</organism>
<name>MEND_MYCSS</name>
<comment type="function">
    <text evidence="1">Catalyzes the thiamine diphosphate-dependent decarboxylation of 2-oxoglutarate and the subsequent addition of the resulting succinic semialdehyde-thiamine pyrophosphate anion to isochorismate to yield 2-succinyl-5-enolpyruvyl-6-hydroxy-3-cyclohexene-1-carboxylate (SEPHCHC).</text>
</comment>
<comment type="catalytic activity">
    <reaction evidence="1">
        <text>isochorismate + 2-oxoglutarate + H(+) = 5-enolpyruvoyl-6-hydroxy-2-succinyl-cyclohex-3-ene-1-carboxylate + CO2</text>
        <dbReference type="Rhea" id="RHEA:25593"/>
        <dbReference type="ChEBI" id="CHEBI:15378"/>
        <dbReference type="ChEBI" id="CHEBI:16526"/>
        <dbReference type="ChEBI" id="CHEBI:16810"/>
        <dbReference type="ChEBI" id="CHEBI:29780"/>
        <dbReference type="ChEBI" id="CHEBI:58818"/>
        <dbReference type="EC" id="2.2.1.9"/>
    </reaction>
</comment>
<comment type="cofactor">
    <cofactor evidence="1">
        <name>Mg(2+)</name>
        <dbReference type="ChEBI" id="CHEBI:18420"/>
    </cofactor>
    <cofactor evidence="1">
        <name>Mn(2+)</name>
        <dbReference type="ChEBI" id="CHEBI:29035"/>
    </cofactor>
</comment>
<comment type="cofactor">
    <cofactor evidence="1">
        <name>thiamine diphosphate</name>
        <dbReference type="ChEBI" id="CHEBI:58937"/>
    </cofactor>
    <text evidence="1">Binds 1 thiamine pyrophosphate per subunit.</text>
</comment>
<comment type="pathway">
    <text evidence="1">Quinol/quinone metabolism; 1,4-dihydroxy-2-naphthoate biosynthesis; 1,4-dihydroxy-2-naphthoate from chorismate: step 2/7.</text>
</comment>
<comment type="pathway">
    <text evidence="1">Quinol/quinone metabolism; menaquinone biosynthesis.</text>
</comment>
<comment type="subunit">
    <text evidence="1">Homodimer.</text>
</comment>
<comment type="similarity">
    <text evidence="1">Belongs to the TPP enzyme family. MenD subfamily.</text>
</comment>
<sequence>MNPSTAQARVVVDELVRGGVHDVVLCPGSRNAPLAFALADADRAGRLRLHVRIDERTAGFLAIGLAVADRAPVCVAMTSGTAVANLGPAVVEANYARVPLIVLSANRPYELLGTGANQTFEQLGYFGNQVRANISLGLAPELSSGSPGDMTSLNAQWRSATCRVVVAATGSRSANAGPVQFDIPLREPLVPTFDDDGSCPPGRPDGKPWTHTPPVTFDQPLDIDLTPDTVVIAGHGAGVHPNLADLPTVAEPTAPPAANPLHPMALRLLRPKQVIMLGRPTLHRPVSALLADPSVPVYALTTGPRWPDVSGNSQATGTRAVTSGTPDPAWLRRCKEVNDHAVAAVREQLAAHPLTTGLHVAAAVADAVRPGDQLVLGASNPVRDAALVGFTPHGVQVRSNRGVAGIDGTVSTAIGAALAHDRTGGRTIALMGDLTFVHDSSGLLIGPTEPTPRNLTIVVSNDNGGGIFELLEQGDPRFSDVSSRVFGTPHDVDVGALCRAYHVDNRQIEVGQLADALDEPHEGMRVLEVKADRSSLRALHASIKAAL</sequence>
<keyword id="KW-0460">Magnesium</keyword>
<keyword id="KW-0464">Manganese</keyword>
<keyword id="KW-0474">Menaquinone biosynthesis</keyword>
<keyword id="KW-0479">Metal-binding</keyword>
<keyword id="KW-0786">Thiamine pyrophosphate</keyword>
<keyword id="KW-0808">Transferase</keyword>
<accession>Q1BE13</accession>
<dbReference type="EC" id="2.2.1.9" evidence="1"/>
<dbReference type="EMBL" id="CP000384">
    <property type="protein sequence ID" value="ABG06871.1"/>
    <property type="molecule type" value="Genomic_DNA"/>
</dbReference>
<dbReference type="SMR" id="Q1BE13"/>
<dbReference type="KEGG" id="mmc:Mmcs_0751"/>
<dbReference type="HOGENOM" id="CLU_006051_4_1_11"/>
<dbReference type="BioCyc" id="MSP164756:G1G6O-766-MONOMER"/>
<dbReference type="UniPathway" id="UPA00079"/>
<dbReference type="UniPathway" id="UPA01057">
    <property type="reaction ID" value="UER00164"/>
</dbReference>
<dbReference type="GO" id="GO:0070204">
    <property type="term" value="F:2-succinyl-5-enolpyruvyl-6-hydroxy-3-cyclohexene-1-carboxylic-acid synthase activity"/>
    <property type="evidence" value="ECO:0007669"/>
    <property type="project" value="UniProtKB-UniRule"/>
</dbReference>
<dbReference type="GO" id="GO:0000287">
    <property type="term" value="F:magnesium ion binding"/>
    <property type="evidence" value="ECO:0007669"/>
    <property type="project" value="UniProtKB-UniRule"/>
</dbReference>
<dbReference type="GO" id="GO:0030145">
    <property type="term" value="F:manganese ion binding"/>
    <property type="evidence" value="ECO:0007669"/>
    <property type="project" value="UniProtKB-UniRule"/>
</dbReference>
<dbReference type="GO" id="GO:0030976">
    <property type="term" value="F:thiamine pyrophosphate binding"/>
    <property type="evidence" value="ECO:0007669"/>
    <property type="project" value="UniProtKB-UniRule"/>
</dbReference>
<dbReference type="GO" id="GO:0009234">
    <property type="term" value="P:menaquinone biosynthetic process"/>
    <property type="evidence" value="ECO:0007669"/>
    <property type="project" value="UniProtKB-UniRule"/>
</dbReference>
<dbReference type="CDD" id="cd07037">
    <property type="entry name" value="TPP_PYR_MenD"/>
    <property type="match status" value="1"/>
</dbReference>
<dbReference type="CDD" id="cd02009">
    <property type="entry name" value="TPP_SHCHC_synthase"/>
    <property type="match status" value="1"/>
</dbReference>
<dbReference type="Gene3D" id="3.40.50.970">
    <property type="match status" value="2"/>
</dbReference>
<dbReference type="Gene3D" id="3.40.50.1220">
    <property type="entry name" value="TPP-binding domain"/>
    <property type="match status" value="1"/>
</dbReference>
<dbReference type="HAMAP" id="MF_01659">
    <property type="entry name" value="MenD"/>
    <property type="match status" value="1"/>
</dbReference>
<dbReference type="InterPro" id="IPR004433">
    <property type="entry name" value="MenaQ_synth_MenD"/>
</dbReference>
<dbReference type="InterPro" id="IPR029061">
    <property type="entry name" value="THDP-binding"/>
</dbReference>
<dbReference type="InterPro" id="IPR012001">
    <property type="entry name" value="Thiamin_PyroP_enz_TPP-bd_dom"/>
</dbReference>
<dbReference type="NCBIfam" id="TIGR00173">
    <property type="entry name" value="menD"/>
    <property type="match status" value="1"/>
</dbReference>
<dbReference type="PANTHER" id="PTHR42916">
    <property type="entry name" value="2-SUCCINYL-5-ENOLPYRUVYL-6-HYDROXY-3-CYCLOHEXENE-1-CARBOXYLATE SYNTHASE"/>
    <property type="match status" value="1"/>
</dbReference>
<dbReference type="PANTHER" id="PTHR42916:SF1">
    <property type="entry name" value="PROTEIN PHYLLO, CHLOROPLASTIC"/>
    <property type="match status" value="1"/>
</dbReference>
<dbReference type="Pfam" id="PF02776">
    <property type="entry name" value="TPP_enzyme_N"/>
    <property type="match status" value="1"/>
</dbReference>
<dbReference type="PIRSF" id="PIRSF004983">
    <property type="entry name" value="MenD"/>
    <property type="match status" value="1"/>
</dbReference>
<dbReference type="SUPFAM" id="SSF52518">
    <property type="entry name" value="Thiamin diphosphate-binding fold (THDP-binding)"/>
    <property type="match status" value="2"/>
</dbReference>
<evidence type="ECO:0000255" key="1">
    <source>
        <dbReference type="HAMAP-Rule" id="MF_01659"/>
    </source>
</evidence>
<gene>
    <name evidence="1" type="primary">menD</name>
    <name type="ordered locus">Mmcs_0751</name>
</gene>
<feature type="chain" id="PRO_0000341783" description="2-succinyl-5-enolpyruvyl-6-hydroxy-3-cyclohexene-1-carboxylate synthase">
    <location>
        <begin position="1"/>
        <end position="547"/>
    </location>
</feature>
<protein>
    <recommendedName>
        <fullName evidence="1">2-succinyl-5-enolpyruvyl-6-hydroxy-3-cyclohexene-1-carboxylate synthase</fullName>
        <shortName evidence="1">SEPHCHC synthase</shortName>
        <ecNumber evidence="1">2.2.1.9</ecNumber>
    </recommendedName>
    <alternativeName>
        <fullName evidence="1">Menaquinone biosynthesis protein MenD</fullName>
    </alternativeName>
</protein>
<proteinExistence type="inferred from homology"/>
<reference key="1">
    <citation type="submission" date="2006-06" db="EMBL/GenBank/DDBJ databases">
        <title>Complete sequence of chromosome of Mycobacterium sp. MCS.</title>
        <authorList>
            <consortium name="US DOE Joint Genome Institute"/>
            <person name="Copeland A."/>
            <person name="Lucas S."/>
            <person name="Lapidus A."/>
            <person name="Barry K."/>
            <person name="Detter J.C."/>
            <person name="Glavina del Rio T."/>
            <person name="Hammon N."/>
            <person name="Israni S."/>
            <person name="Dalin E."/>
            <person name="Tice H."/>
            <person name="Pitluck S."/>
            <person name="Martinez M."/>
            <person name="Schmutz J."/>
            <person name="Larimer F."/>
            <person name="Land M."/>
            <person name="Hauser L."/>
            <person name="Kyrpides N."/>
            <person name="Kim E."/>
            <person name="Miller C.D."/>
            <person name="Hughes J.E."/>
            <person name="Anderson A.J."/>
            <person name="Sims R.C."/>
            <person name="Richardson P."/>
        </authorList>
    </citation>
    <scope>NUCLEOTIDE SEQUENCE [LARGE SCALE GENOMIC DNA]</scope>
    <source>
        <strain>MCS</strain>
    </source>
</reference>